<reference key="1">
    <citation type="journal article" date="2000" name="Virology">
        <title>A novel lipothrixvirus, SIFV, of the extremely thermophilic crenarchaeon Sulfolobus.</title>
        <authorList>
            <person name="Arnold H.P."/>
            <person name="Zillig W."/>
            <person name="Ziese U."/>
            <person name="Holz I."/>
            <person name="Crosby M."/>
            <person name="Utterback T."/>
            <person name="Weidmann J.F."/>
            <person name="Umayam L.A."/>
            <person name="Teffera K."/>
            <person name="Kristjanson J.K."/>
            <person name="Klenk H.P."/>
            <person name="Nelson K.E."/>
            <person name="Fraser C.M."/>
        </authorList>
    </citation>
    <scope>NUCLEOTIDE SEQUENCE [GENOMIC DNA]</scope>
</reference>
<gene>
    <name type="primary">SIFV0060</name>
</gene>
<dbReference type="EMBL" id="AF440571">
    <property type="protein sequence ID" value="AAL27769.1"/>
    <property type="molecule type" value="Genomic_DNA"/>
</dbReference>
<dbReference type="RefSeq" id="NP_445723.1">
    <property type="nucleotide sequence ID" value="NC_003214.2"/>
</dbReference>
<dbReference type="GeneID" id="922320"/>
<dbReference type="KEGG" id="vg:922320"/>
<dbReference type="Proteomes" id="UP000007017">
    <property type="component" value="Segment"/>
</dbReference>
<organism>
    <name type="scientific">Sulfolobus islandicus filamentous virus (isolate Iceland/Hveragerdi)</name>
    <name type="common">SIFV</name>
    <dbReference type="NCBI Taxonomy" id="654908"/>
    <lineage>
        <taxon>Viruses</taxon>
        <taxon>Adnaviria</taxon>
        <taxon>Zilligvirae</taxon>
        <taxon>Taleaviricota</taxon>
        <taxon>Tokiviricetes</taxon>
        <taxon>Ligamenvirales</taxon>
        <taxon>Lipothrixviridae</taxon>
        <taxon>Betalipothrixvirus</taxon>
        <taxon>Sulfolobus islandicus filamentous virus</taxon>
    </lineage>
</organism>
<accession>Q914H2</accession>
<protein>
    <recommendedName>
        <fullName>Uncharacterized protein 60</fullName>
    </recommendedName>
</protein>
<feature type="chain" id="PRO_0000385408" description="Uncharacterized protein 60">
    <location>
        <begin position="1"/>
        <end position="348"/>
    </location>
</feature>
<organismHost>
    <name type="scientific">Saccharolobus islandicus</name>
    <name type="common">Sulfolobus islandicus</name>
    <dbReference type="NCBI Taxonomy" id="43080"/>
</organismHost>
<name>Y060_SIFVH</name>
<proteinExistence type="predicted"/>
<keyword id="KW-1185">Reference proteome</keyword>
<sequence length="348" mass="37805">MSGMKKNIVVQNELVQVKGRVKAITIKKEDFNEFLKLTTLRVFNKSYDVLMPPIDDMKKNTIDLNGLTIVTQNYLSLLLYQSGATSPSTTAQINLSTSSGSPVTLQYSSKINSNSQGLMVLLQIFEANGNLTFQYYFIGFDTTNSSYSATQAELYASAWVNTSNTGNYCASVNPVTMYTNLVRIAYTNISITKSATEYLFMVWLIEFENVPSYAPFAVPIFANALNLAPIAESTACGSPPPSSVTIYFYNGNCNFTCGGNCPNGGLSSFVEYIQNNALTVEFPLQAPIQGGASNPEVFICTTLNFTYTNSTSVITQISGNESTTVTPPVSGATFYVAIVTISITYTVS</sequence>